<name>THDH_YEAST</name>
<dbReference type="EC" id="4.3.1.19"/>
<dbReference type="EMBL" id="M36383">
    <property type="protein sequence ID" value="AAA34705.1"/>
    <property type="molecule type" value="Genomic_DNA"/>
</dbReference>
<dbReference type="EMBL" id="X01466">
    <property type="protein sequence ID" value="CAA25696.1"/>
    <property type="molecule type" value="Genomic_DNA"/>
</dbReference>
<dbReference type="EMBL" id="U18839">
    <property type="protein sequence ID" value="AAB64641.1"/>
    <property type="molecule type" value="Genomic_DNA"/>
</dbReference>
<dbReference type="EMBL" id="BK006939">
    <property type="protein sequence ID" value="DAA07746.1"/>
    <property type="molecule type" value="Genomic_DNA"/>
</dbReference>
<dbReference type="PIR" id="S50589">
    <property type="entry name" value="DWBYT"/>
</dbReference>
<dbReference type="RefSeq" id="NP_011009.1">
    <property type="nucleotide sequence ID" value="NM_001178977.1"/>
</dbReference>
<dbReference type="SMR" id="P00927"/>
<dbReference type="BioGRID" id="36830">
    <property type="interactions" value="801"/>
</dbReference>
<dbReference type="DIP" id="DIP-4029N"/>
<dbReference type="FunCoup" id="P00927">
    <property type="interactions" value="653"/>
</dbReference>
<dbReference type="IntAct" id="P00927">
    <property type="interactions" value="54"/>
</dbReference>
<dbReference type="MINT" id="P00927"/>
<dbReference type="STRING" id="4932.YER086W"/>
<dbReference type="iPTMnet" id="P00927"/>
<dbReference type="PaxDb" id="4932-YER086W"/>
<dbReference type="PeptideAtlas" id="P00927"/>
<dbReference type="EnsemblFungi" id="YER086W_mRNA">
    <property type="protein sequence ID" value="YER086W"/>
    <property type="gene ID" value="YER086W"/>
</dbReference>
<dbReference type="GeneID" id="856819"/>
<dbReference type="KEGG" id="sce:YER086W"/>
<dbReference type="AGR" id="SGD:S000000888"/>
<dbReference type="SGD" id="S000000888">
    <property type="gene designation" value="ILV1"/>
</dbReference>
<dbReference type="VEuPathDB" id="FungiDB:YER086W"/>
<dbReference type="eggNOG" id="KOG1250">
    <property type="taxonomic scope" value="Eukaryota"/>
</dbReference>
<dbReference type="HOGENOM" id="CLU_021152_6_0_1"/>
<dbReference type="InParanoid" id="P00927"/>
<dbReference type="OMA" id="TRFEYTK"/>
<dbReference type="OrthoDB" id="4418812at2759"/>
<dbReference type="BioCyc" id="YEAST:YER086W-MONOMER"/>
<dbReference type="UniPathway" id="UPA00047">
    <property type="reaction ID" value="UER00054"/>
</dbReference>
<dbReference type="BioGRID-ORCS" id="856819">
    <property type="hits" value="10 hits in 10 CRISPR screens"/>
</dbReference>
<dbReference type="PRO" id="PR:P00927"/>
<dbReference type="Proteomes" id="UP000002311">
    <property type="component" value="Chromosome V"/>
</dbReference>
<dbReference type="RNAct" id="P00927">
    <property type="molecule type" value="protein"/>
</dbReference>
<dbReference type="GO" id="GO:0005739">
    <property type="term" value="C:mitochondrion"/>
    <property type="evidence" value="ECO:0007005"/>
    <property type="project" value="SGD"/>
</dbReference>
<dbReference type="GO" id="GO:0030170">
    <property type="term" value="F:pyridoxal phosphate binding"/>
    <property type="evidence" value="ECO:0007669"/>
    <property type="project" value="InterPro"/>
</dbReference>
<dbReference type="GO" id="GO:0004794">
    <property type="term" value="F:threonine deaminase activity"/>
    <property type="evidence" value="ECO:0000315"/>
    <property type="project" value="SGD"/>
</dbReference>
<dbReference type="GO" id="GO:0009097">
    <property type="term" value="P:isoleucine biosynthetic process"/>
    <property type="evidence" value="ECO:0000315"/>
    <property type="project" value="SGD"/>
</dbReference>
<dbReference type="GO" id="GO:0006567">
    <property type="term" value="P:threonine catabolic process"/>
    <property type="evidence" value="ECO:0000316"/>
    <property type="project" value="SGD"/>
</dbReference>
<dbReference type="CDD" id="cd04906">
    <property type="entry name" value="ACT_ThrD-I_1"/>
    <property type="match status" value="1"/>
</dbReference>
<dbReference type="CDD" id="cd04907">
    <property type="entry name" value="ACT_ThrD-I_2"/>
    <property type="match status" value="1"/>
</dbReference>
<dbReference type="CDD" id="cd01562">
    <property type="entry name" value="Thr-dehyd"/>
    <property type="match status" value="1"/>
</dbReference>
<dbReference type="FunFam" id="3.40.1020.10:FF:000001">
    <property type="entry name" value="L-threonine dehydratase"/>
    <property type="match status" value="1"/>
</dbReference>
<dbReference type="FunFam" id="3.40.50.1100:FF:000008">
    <property type="entry name" value="L-threonine dehydratase"/>
    <property type="match status" value="1"/>
</dbReference>
<dbReference type="FunFam" id="3.40.50.1100:FF:000005">
    <property type="entry name" value="Threonine dehydratase catabolic"/>
    <property type="match status" value="1"/>
</dbReference>
<dbReference type="Gene3D" id="3.40.50.1100">
    <property type="match status" value="2"/>
</dbReference>
<dbReference type="Gene3D" id="3.40.1020.10">
    <property type="entry name" value="Biosynthetic Threonine Deaminase, Domain 3"/>
    <property type="match status" value="1"/>
</dbReference>
<dbReference type="InterPro" id="IPR045865">
    <property type="entry name" value="ACT-like_dom_sf"/>
</dbReference>
<dbReference type="InterPro" id="IPR050147">
    <property type="entry name" value="Ser/Thr_Dehydratase"/>
</dbReference>
<dbReference type="InterPro" id="IPR000634">
    <property type="entry name" value="Ser/Thr_deHydtase_PyrdxlP-BS"/>
</dbReference>
<dbReference type="InterPro" id="IPR001721">
    <property type="entry name" value="TD_ACT-like"/>
</dbReference>
<dbReference type="InterPro" id="IPR038110">
    <property type="entry name" value="TD_ACT-like_sf"/>
</dbReference>
<dbReference type="InterPro" id="IPR005787">
    <property type="entry name" value="Thr_deHydtase_biosynth"/>
</dbReference>
<dbReference type="InterPro" id="IPR001926">
    <property type="entry name" value="TrpB-like_PALP"/>
</dbReference>
<dbReference type="InterPro" id="IPR036052">
    <property type="entry name" value="TrpB-like_PALP_sf"/>
</dbReference>
<dbReference type="NCBIfam" id="TIGR01124">
    <property type="entry name" value="ilvA_2Cterm"/>
    <property type="match status" value="1"/>
</dbReference>
<dbReference type="NCBIfam" id="NF006674">
    <property type="entry name" value="PRK09224.1"/>
    <property type="match status" value="1"/>
</dbReference>
<dbReference type="PANTHER" id="PTHR48078:SF11">
    <property type="entry name" value="THREONINE DEHYDRATASE, MITOCHONDRIAL"/>
    <property type="match status" value="1"/>
</dbReference>
<dbReference type="PANTHER" id="PTHR48078">
    <property type="entry name" value="THREONINE DEHYDRATASE, MITOCHONDRIAL-RELATED"/>
    <property type="match status" value="1"/>
</dbReference>
<dbReference type="Pfam" id="PF00291">
    <property type="entry name" value="PALP"/>
    <property type="match status" value="1"/>
</dbReference>
<dbReference type="Pfam" id="PF00585">
    <property type="entry name" value="Thr_dehydrat_C"/>
    <property type="match status" value="2"/>
</dbReference>
<dbReference type="SUPFAM" id="SSF55021">
    <property type="entry name" value="ACT-like"/>
    <property type="match status" value="1"/>
</dbReference>
<dbReference type="SUPFAM" id="SSF53686">
    <property type="entry name" value="Tryptophan synthase beta subunit-like PLP-dependent enzymes"/>
    <property type="match status" value="1"/>
</dbReference>
<dbReference type="PROSITE" id="PS51672">
    <property type="entry name" value="ACT_LIKE"/>
    <property type="match status" value="2"/>
</dbReference>
<dbReference type="PROSITE" id="PS00165">
    <property type="entry name" value="DEHYDRATASE_SER_THR"/>
    <property type="match status" value="1"/>
</dbReference>
<reference key="1">
    <citation type="journal article" date="1984" name="Carlsberg Res. Commun.">
        <title>Nucleotide sequence of the gene for threonine deaminase (ILV1) of Saccharomyces cerevisiae.</title>
        <authorList>
            <person name="Kielland-Brandt M.C."/>
            <person name="Holmberg S."/>
            <person name="Petersen J.G.L."/>
            <person name="Nilsson-Tillgren T."/>
        </authorList>
    </citation>
    <scope>NUCLEOTIDE SEQUENCE [GENOMIC DNA]</scope>
</reference>
<reference key="2">
    <citation type="journal article" date="1997" name="Nature">
        <title>The nucleotide sequence of Saccharomyces cerevisiae chromosome V.</title>
        <authorList>
            <person name="Dietrich F.S."/>
            <person name="Mulligan J.T."/>
            <person name="Hennessy K.M."/>
            <person name="Yelton M.A."/>
            <person name="Allen E."/>
            <person name="Araujo R."/>
            <person name="Aviles E."/>
            <person name="Berno A."/>
            <person name="Brennan T."/>
            <person name="Carpenter J."/>
            <person name="Chen E."/>
            <person name="Cherry J.M."/>
            <person name="Chung E."/>
            <person name="Duncan M."/>
            <person name="Guzman E."/>
            <person name="Hartzell G."/>
            <person name="Hunicke-Smith S."/>
            <person name="Hyman R.W."/>
            <person name="Kayser A."/>
            <person name="Komp C."/>
            <person name="Lashkari D."/>
            <person name="Lew H."/>
            <person name="Lin D."/>
            <person name="Mosedale D."/>
            <person name="Nakahara K."/>
            <person name="Namath A."/>
            <person name="Norgren R."/>
            <person name="Oefner P."/>
            <person name="Oh C."/>
            <person name="Petel F.X."/>
            <person name="Roberts D."/>
            <person name="Sehl P."/>
            <person name="Schramm S."/>
            <person name="Shogren T."/>
            <person name="Smith V."/>
            <person name="Taylor P."/>
            <person name="Wei Y."/>
            <person name="Botstein D."/>
            <person name="Davis R.W."/>
        </authorList>
    </citation>
    <scope>NUCLEOTIDE SEQUENCE [LARGE SCALE GENOMIC DNA]</scope>
    <source>
        <strain>ATCC 204508 / S288c</strain>
    </source>
</reference>
<reference key="3">
    <citation type="journal article" date="2014" name="G3 (Bethesda)">
        <title>The reference genome sequence of Saccharomyces cerevisiae: Then and now.</title>
        <authorList>
            <person name="Engel S.R."/>
            <person name="Dietrich F.S."/>
            <person name="Fisk D.G."/>
            <person name="Binkley G."/>
            <person name="Balakrishnan R."/>
            <person name="Costanzo M.C."/>
            <person name="Dwight S.S."/>
            <person name="Hitz B.C."/>
            <person name="Karra K."/>
            <person name="Nash R.S."/>
            <person name="Weng S."/>
            <person name="Wong E.D."/>
            <person name="Lloyd P."/>
            <person name="Skrzypek M.S."/>
            <person name="Miyasato S.R."/>
            <person name="Simison M."/>
            <person name="Cherry J.M."/>
        </authorList>
    </citation>
    <scope>GENOME REANNOTATION</scope>
    <source>
        <strain>ATCC 204508 / S288c</strain>
    </source>
</reference>
<reference key="4">
    <citation type="journal article" date="1976" name="Biochimie">
        <title>Purification and properties of threonine deaminase from Saccharomyces cerevisiae.</title>
        <authorList>
            <person name="Ahmed S.I."/>
            <person name="Bollon A.P."/>
            <person name="Rogers S.J."/>
            <person name="Magee P.T."/>
        </authorList>
    </citation>
    <scope>ACTIVITY REGULATION</scope>
</reference>
<reference key="5">
    <citation type="journal article" date="1988" name="Curr. Genet.">
        <title>Regulation of isoleucine-valine biosynthesis in Saccharomyces cerevisiae.</title>
        <authorList>
            <person name="Holmberg S."/>
            <person name="Petersen J.G."/>
        </authorList>
    </citation>
    <scope>ENZYME ACTIVITY</scope>
    <scope>INDUCTION</scope>
</reference>
<reference key="6">
    <citation type="journal article" date="2003" name="Nature">
        <title>Global analysis of protein localization in budding yeast.</title>
        <authorList>
            <person name="Huh W.-K."/>
            <person name="Falvo J.V."/>
            <person name="Gerke L.C."/>
            <person name="Carroll A.S."/>
            <person name="Howson R.W."/>
            <person name="Weissman J.S."/>
            <person name="O'Shea E.K."/>
        </authorList>
    </citation>
    <scope>SUBCELLULAR LOCATION [LARGE SCALE ANALYSIS]</scope>
</reference>
<reference key="7">
    <citation type="journal article" date="2003" name="Nature">
        <title>Global analysis of protein expression in yeast.</title>
        <authorList>
            <person name="Ghaemmaghami S."/>
            <person name="Huh W.-K."/>
            <person name="Bower K."/>
            <person name="Howson R.W."/>
            <person name="Belle A."/>
            <person name="Dephoure N."/>
            <person name="O'Shea E.K."/>
            <person name="Weissman J.S."/>
        </authorList>
    </citation>
    <scope>LEVEL OF PROTEIN EXPRESSION [LARGE SCALE ANALYSIS]</scope>
</reference>
<reference key="8">
    <citation type="journal article" date="2003" name="Proc. Natl. Acad. Sci. U.S.A.">
        <title>The proteome of Saccharomyces cerevisiae mitochondria.</title>
        <authorList>
            <person name="Sickmann A."/>
            <person name="Reinders J."/>
            <person name="Wagner Y."/>
            <person name="Joppich C."/>
            <person name="Zahedi R.P."/>
            <person name="Meyer H.E."/>
            <person name="Schoenfisch B."/>
            <person name="Perschil I."/>
            <person name="Chacinska A."/>
            <person name="Guiard B."/>
            <person name="Rehling P."/>
            <person name="Pfanner N."/>
            <person name="Meisinger C."/>
        </authorList>
    </citation>
    <scope>SUBCELLULAR LOCATION [LARGE SCALE ANALYSIS]</scope>
    <source>
        <strain>ATCC 76625 / YPH499</strain>
    </source>
</reference>
<keyword id="KW-0021">Allosteric enzyme</keyword>
<keyword id="KW-0028">Amino-acid biosynthesis</keyword>
<keyword id="KW-0100">Branched-chain amino acid biosynthesis</keyword>
<keyword id="KW-0412">Isoleucine biosynthesis</keyword>
<keyword id="KW-0456">Lyase</keyword>
<keyword id="KW-0496">Mitochondrion</keyword>
<keyword id="KW-0663">Pyridoxal phosphate</keyword>
<keyword id="KW-1185">Reference proteome</keyword>
<keyword id="KW-0677">Repeat</keyword>
<keyword id="KW-0809">Transit peptide</keyword>
<sequence length="576" mass="63831">MSATLLKQPLCTVVRQGKQSKVSGLNLLRLKAHLHRQHLSPSLIKLHSELKLDELQTDNTPDYVRLVLRSSVYDVINESPISQGVGLSSRLNTNVILKREDLLPVFSFKLRGAYNMIAKLDDSQRNQGVIACSAGNHAQGVAFAAKHLKIPATIVMPVCTPSIKYQNVSRLGSQVVLYGNDFDEAKAECAKLAEERGLTNIPPFDHPYVIAGQGTVAMEILRQVRTANKIGAVFVPVGGGGLIAGIGAYLKRVAPHIKIIGVETYDAATLHNSLQRNQRTPLPVVGTFADGTSVRMIGEETFRVAQQVVDEVVLVNTDEICAAVKDIFEDTRSIVEPSGALSVAGMKKYISTVHPEIDHTKNTYVPILSGANMNFDRLRFVSERAVLGEGKEVFMLVTLPDVPGAFKKMQKIIHPRSVTEFSYRYNEHRHESSSEVPKAYIYTSFSVVDREKEIKQVMQQLNALGFEAVDISDNELAKSHGRYLVGGASKVPNERIISFEFPERPGALTRFLGGLSDSWNLTLFHYRNHGADIGKVLAGISVPPRENLTFQKFLEDLGYTYHDETDNTVYQKFLKY</sequence>
<protein>
    <recommendedName>
        <fullName>Threonine dehydratase, mitochondrial</fullName>
        <ecNumber>4.3.1.19</ecNumber>
    </recommendedName>
    <alternativeName>
        <fullName>Threonine deaminase</fullName>
    </alternativeName>
</protein>
<comment type="catalytic activity">
    <reaction evidence="7">
        <text>L-threonine = 2-oxobutanoate + NH4(+)</text>
        <dbReference type="Rhea" id="RHEA:22108"/>
        <dbReference type="ChEBI" id="CHEBI:16763"/>
        <dbReference type="ChEBI" id="CHEBI:28938"/>
        <dbReference type="ChEBI" id="CHEBI:57926"/>
        <dbReference type="EC" id="4.3.1.19"/>
    </reaction>
</comment>
<comment type="cofactor">
    <cofactor>
        <name>pyridoxal 5'-phosphate</name>
        <dbReference type="ChEBI" id="CHEBI:597326"/>
    </cofactor>
</comment>
<comment type="activity regulation">
    <text evidence="8">Isoleucine allosterically inhibits while valine allosterically activates this enzyme.</text>
</comment>
<comment type="pathway">
    <text>Amino-acid biosynthesis; L-isoleucine biosynthesis; 2-oxobutanoate from L-threonine: step 1/1.</text>
</comment>
<comment type="subunit">
    <text>Homotetramer.</text>
</comment>
<comment type="subcellular location">
    <subcellularLocation>
        <location evidence="4 6">Mitochondrion</location>
    </subcellularLocation>
</comment>
<comment type="induction">
    <text evidence="7">In response to starvation for tryptophan and branched-chain amino acid imbalance.</text>
</comment>
<comment type="miscellaneous">
    <text evidence="5">Present with 11900 molecules/cell in log phase SD medium.</text>
</comment>
<comment type="similarity">
    <text evidence="9">Belongs to the serine/threonine dehydratase family.</text>
</comment>
<evidence type="ECO:0000250" key="1"/>
<evidence type="ECO:0000255" key="2"/>
<evidence type="ECO:0000255" key="3">
    <source>
        <dbReference type="PROSITE-ProRule" id="PRU01008"/>
    </source>
</evidence>
<evidence type="ECO:0000269" key="4">
    <source>
    </source>
</evidence>
<evidence type="ECO:0000269" key="5">
    <source>
    </source>
</evidence>
<evidence type="ECO:0000269" key="6">
    <source>
    </source>
</evidence>
<evidence type="ECO:0000269" key="7">
    <source>
    </source>
</evidence>
<evidence type="ECO:0000269" key="8">
    <source>
    </source>
</evidence>
<evidence type="ECO:0000305" key="9"/>
<organism>
    <name type="scientific">Saccharomyces cerevisiae (strain ATCC 204508 / S288c)</name>
    <name type="common">Baker's yeast</name>
    <dbReference type="NCBI Taxonomy" id="559292"/>
    <lineage>
        <taxon>Eukaryota</taxon>
        <taxon>Fungi</taxon>
        <taxon>Dikarya</taxon>
        <taxon>Ascomycota</taxon>
        <taxon>Saccharomycotina</taxon>
        <taxon>Saccharomycetes</taxon>
        <taxon>Saccharomycetales</taxon>
        <taxon>Saccharomycetaceae</taxon>
        <taxon>Saccharomyces</taxon>
    </lineage>
</organism>
<feature type="transit peptide" description="Mitochondrion" evidence="2">
    <location>
        <begin position="1"/>
        <end status="unknown"/>
    </location>
</feature>
<feature type="chain" id="PRO_0000033616" description="Threonine dehydratase, mitochondrial">
    <location>
        <begin status="unknown"/>
        <end position="576"/>
    </location>
</feature>
<feature type="domain" description="ACT-like 1" evidence="3">
    <location>
        <begin position="393"/>
        <end position="473"/>
    </location>
</feature>
<feature type="domain" description="ACT-like 2" evidence="3">
    <location>
        <begin position="495"/>
        <end position="566"/>
    </location>
</feature>
<feature type="modified residue" description="N6-(pyridoxal phosphate)lysine" evidence="1">
    <location>
        <position position="109"/>
    </location>
</feature>
<feature type="sequence conflict" description="In Ref. 1; AAA34705." evidence="9" ref="1">
    <original>I</original>
    <variation>T</variation>
    <location>
        <position position="259"/>
    </location>
</feature>
<proteinExistence type="evidence at protein level"/>
<gene>
    <name type="primary">ILV1</name>
    <name type="ordered locus">YER086W</name>
</gene>
<accession>P00927</accession>
<accession>D3DLZ2</accession>